<accession>Q1DFT5</accession>
<keyword id="KW-0963">Cytoplasm</keyword>
<keyword id="KW-0378">Hydrolase</keyword>
<keyword id="KW-0574">Periplasm</keyword>
<keyword id="KW-0645">Protease</keyword>
<keyword id="KW-1185">Reference proteome</keyword>
<keyword id="KW-0964">Secreted</keyword>
<keyword id="KW-0720">Serine protease</keyword>
<keyword id="KW-0346">Stress response</keyword>
<organism>
    <name type="scientific">Myxococcus xanthus (strain DK1622)</name>
    <dbReference type="NCBI Taxonomy" id="246197"/>
    <lineage>
        <taxon>Bacteria</taxon>
        <taxon>Pseudomonadati</taxon>
        <taxon>Myxococcota</taxon>
        <taxon>Myxococcia</taxon>
        <taxon>Myxococcales</taxon>
        <taxon>Cystobacterineae</taxon>
        <taxon>Myxococcaceae</taxon>
        <taxon>Myxococcus</taxon>
    </lineage>
</organism>
<dbReference type="EC" id="3.4.21.-" evidence="8"/>
<dbReference type="EMBL" id="CP000113">
    <property type="protein sequence ID" value="ABF89812.1"/>
    <property type="molecule type" value="Genomic_DNA"/>
</dbReference>
<dbReference type="RefSeq" id="WP_011550352.1">
    <property type="nucleotide sequence ID" value="NC_008095.1"/>
</dbReference>
<dbReference type="SMR" id="Q1DFT5"/>
<dbReference type="STRING" id="246197.MXAN_0206"/>
<dbReference type="MEROPS" id="S08.143"/>
<dbReference type="EnsemblBacteria" id="ABF89812">
    <property type="protein sequence ID" value="ABF89812"/>
    <property type="gene ID" value="MXAN_0206"/>
</dbReference>
<dbReference type="GeneID" id="41357709"/>
<dbReference type="KEGG" id="mxa:MXAN_0206"/>
<dbReference type="eggNOG" id="COG1404">
    <property type="taxonomic scope" value="Bacteria"/>
</dbReference>
<dbReference type="HOGENOM" id="CLU_574680_0_0_7"/>
<dbReference type="OrthoDB" id="9816306at2"/>
<dbReference type="Proteomes" id="UP000002402">
    <property type="component" value="Chromosome"/>
</dbReference>
<dbReference type="GO" id="GO:0005737">
    <property type="term" value="C:cytoplasm"/>
    <property type="evidence" value="ECO:0007669"/>
    <property type="project" value="UniProtKB-SubCell"/>
</dbReference>
<dbReference type="GO" id="GO:0005576">
    <property type="term" value="C:extracellular region"/>
    <property type="evidence" value="ECO:0007669"/>
    <property type="project" value="UniProtKB-SubCell"/>
</dbReference>
<dbReference type="GO" id="GO:0042597">
    <property type="term" value="C:periplasmic space"/>
    <property type="evidence" value="ECO:0007669"/>
    <property type="project" value="UniProtKB-SubCell"/>
</dbReference>
<dbReference type="GO" id="GO:0004252">
    <property type="term" value="F:serine-type endopeptidase activity"/>
    <property type="evidence" value="ECO:0007669"/>
    <property type="project" value="InterPro"/>
</dbReference>
<dbReference type="GO" id="GO:0006508">
    <property type="term" value="P:proteolysis"/>
    <property type="evidence" value="ECO:0007669"/>
    <property type="project" value="UniProtKB-KW"/>
</dbReference>
<dbReference type="Gene3D" id="3.40.50.200">
    <property type="entry name" value="Peptidase S8/S53 domain"/>
    <property type="match status" value="1"/>
</dbReference>
<dbReference type="InterPro" id="IPR000209">
    <property type="entry name" value="Peptidase_S8/S53_dom"/>
</dbReference>
<dbReference type="InterPro" id="IPR036852">
    <property type="entry name" value="Peptidase_S8/S53_dom_sf"/>
</dbReference>
<dbReference type="InterPro" id="IPR051048">
    <property type="entry name" value="Peptidase_S8/S53_subtilisin"/>
</dbReference>
<dbReference type="InterPro" id="IPR022398">
    <property type="entry name" value="Peptidase_S8_His-AS"/>
</dbReference>
<dbReference type="InterPro" id="IPR023828">
    <property type="entry name" value="Peptidase_S8_Ser-AS"/>
</dbReference>
<dbReference type="InterPro" id="IPR015500">
    <property type="entry name" value="Peptidase_S8_subtilisin-rel"/>
</dbReference>
<dbReference type="PANTHER" id="PTHR43399:SF4">
    <property type="entry name" value="CELL WALL-ASSOCIATED PROTEASE"/>
    <property type="match status" value="1"/>
</dbReference>
<dbReference type="PANTHER" id="PTHR43399">
    <property type="entry name" value="SUBTILISIN-RELATED"/>
    <property type="match status" value="1"/>
</dbReference>
<dbReference type="Pfam" id="PF00082">
    <property type="entry name" value="Peptidase_S8"/>
    <property type="match status" value="1"/>
</dbReference>
<dbReference type="PRINTS" id="PR00723">
    <property type="entry name" value="SUBTILISIN"/>
</dbReference>
<dbReference type="SUPFAM" id="SSF52743">
    <property type="entry name" value="Subtilisin-like"/>
    <property type="match status" value="1"/>
</dbReference>
<dbReference type="PROSITE" id="PS51892">
    <property type="entry name" value="SUBTILASE"/>
    <property type="match status" value="1"/>
</dbReference>
<dbReference type="PROSITE" id="PS00137">
    <property type="entry name" value="SUBTILASE_HIS"/>
    <property type="match status" value="1"/>
</dbReference>
<dbReference type="PROSITE" id="PS00138">
    <property type="entry name" value="SUBTILASE_SER"/>
    <property type="match status" value="1"/>
</dbReference>
<proteinExistence type="evidence at protein level"/>
<sequence>MKSYLLVPKESIETQARVGPRGTEQGERVLSRTTALRFAVANKAPDALFALGLRSATLPGARPPVSGQEERRRKGKGAKSARTGTRGADSSTPPMPGATVAEQTGAEPGSYRYMPLIGATMAHFYEDHTEKEARGELERDFEFIPDVVPLSFPGPVSAGQPGPRNRGMSSLAEREWPDECGVPLAHAQGIRGAGVMLGILDTGVDADHPEHAARVIQFRYVSLFPNSPHNPARDIRGFDPDGHGTHVCGIAAGVHHGVAPEVDLYVASVIESETIRTSLGRVAAGMEWLLHQFSRPENSTRPAVVNLSLGFPLMPPPGISEADYNLNLRALQTMIRRLLDSNVLPVVAAGNSGPDTVGYPAAFPESLAVGAVDFERNVATFSASGTVGRRVVPDIMGYGVNVYSSTERRCNNQAFYERMSGTSMAAPYVAGIAALYRCRAPDLTALEVRDLILSNAVKLPRSGTHKTGKGLAVFR</sequence>
<gene>
    <name evidence="6" type="primary">popC</name>
    <name evidence="9" type="ordered locus">MXAN_0206</name>
</gene>
<comment type="function">
    <text evidence="3">Required for fruiting body formation, a multicellular developmental program that is induced in response to starvation (PubMed:18854146). Acts as a subtilisin-like protease that directly cleaves the CsgA precursor protein (p25) on the cell surface to generate the intercellular C-signal protein (p17) in starving cells (PubMed:18854146). Preferentially acts in cis, i.e. PopC secreted by a cell only cleaves p25 on that cell (PubMed:18854146). May also be important for processing of other protein(s) that are important for development (PubMed:18854146).</text>
</comment>
<comment type="activity regulation">
    <text evidence="3 4 5">In non-starving cells, secretion and protease activity are inhibited by formation of a cytoplasmic complex with PopD (PubMed:22404381). In response to starvation, PopD is degraded in a RelA- and FtsH(D)-dependent manner, thereby releasing pre-formed PopC for secretion (PubMed:22404381). Secreted and active during starvation, and rapidly degraded upon secretion (PubMed:18854146). Secretion is significantly and reversibly reduced by carbonyl cyanide m-chlorophenyl hydrazine (CCCP), which dissipates or reduces the proton motive force (PMF), and by nigericin, which affects the pH gradient (PubMed:30911012).</text>
</comment>
<comment type="subunit">
    <text evidence="4">Interacts with PopD in non-starving cells.</text>
</comment>
<comment type="subcellular location">
    <subcellularLocation>
        <location evidence="3 4">Cytoplasm</location>
    </subcellularLocation>
    <subcellularLocation>
        <location evidence="5">Periplasm</location>
    </subcellularLocation>
    <subcellularLocation>
        <location evidence="3 5">Secreted</location>
    </subcellularLocation>
    <text evidence="5">Secreted in a two-step mechanism: PopC accumulates in the periplasm before secretion to the extracellular milieu in response to starvation (PubMed:30911012). Secretion across the outer membrane depends on the transporter Oar and on the ExbB/ExbD/TonB system (PubMed:30911012). Does not contain a signal peptide and is secreted as a full-length protein (PubMed:30911012).</text>
</comment>
<comment type="disruption phenotype">
    <text evidence="3">Disruption mutant does not show any signs of fruiting body formation even after 120 hours of starvation (PubMed:18854146). Sporulation is strongly reduced (PubMed:18854146). The precursor protein p25 accumulates as in the wild type strain, but p17 is not detected (PubMed:18854146).</text>
</comment>
<comment type="similarity">
    <text evidence="1">Belongs to the peptidase S8 family.</text>
</comment>
<feature type="chain" id="PRO_0000458098" description="Subtilisin-like protease PopC">
    <location>
        <begin position="1"/>
        <end position="475"/>
    </location>
</feature>
<feature type="domain" description="Peptidase S8" evidence="1">
    <location>
        <begin position="165"/>
        <end position="475"/>
    </location>
</feature>
<feature type="region of interest" description="Disordered" evidence="2">
    <location>
        <begin position="1"/>
        <end position="27"/>
    </location>
</feature>
<feature type="region of interest" description="Disordered" evidence="2">
    <location>
        <begin position="57"/>
        <end position="106"/>
    </location>
</feature>
<feature type="active site" description="Charge relay system" evidence="1">
    <location>
        <position position="201"/>
    </location>
</feature>
<feature type="active site" description="Charge relay system" evidence="1">
    <location>
        <position position="243"/>
    </location>
</feature>
<feature type="active site" description="Charge relay system" evidence="1">
    <location>
        <position position="423"/>
    </location>
</feature>
<feature type="mutagenesis site" description="Loss of activity. Cannot cleave p25. Cannot complement the developmental defects of the disruption mutant." evidence="3">
    <original>S</original>
    <variation>A</variation>
    <location>
        <position position="423"/>
    </location>
</feature>
<name>POPC_MYXXD</name>
<protein>
    <recommendedName>
        <fullName evidence="7">Subtilisin-like protease PopC</fullName>
        <ecNumber evidence="8">3.4.21.-</ecNumber>
    </recommendedName>
</protein>
<reference key="1">
    <citation type="journal article" date="2006" name="Proc. Natl. Acad. Sci. U.S.A.">
        <title>Evolution of sensory complexity recorded in a myxobacterial genome.</title>
        <authorList>
            <person name="Goldman B.S."/>
            <person name="Nierman W.C."/>
            <person name="Kaiser D."/>
            <person name="Slater S.C."/>
            <person name="Durkin A.S."/>
            <person name="Eisen J.A."/>
            <person name="Ronning C.M."/>
            <person name="Barbazuk W.B."/>
            <person name="Blanchard M."/>
            <person name="Field C."/>
            <person name="Halling C."/>
            <person name="Hinkle G."/>
            <person name="Iartchuk O."/>
            <person name="Kim H.S."/>
            <person name="Mackenzie C."/>
            <person name="Madupu R."/>
            <person name="Miller N."/>
            <person name="Shvartsbeyn A."/>
            <person name="Sullivan S.A."/>
            <person name="Vaudin M."/>
            <person name="Wiegand R."/>
            <person name="Kaplan H.B."/>
        </authorList>
    </citation>
    <scope>NUCLEOTIDE SEQUENCE [LARGE SCALE GENOMIC DNA]</scope>
    <source>
        <strain>DK1622</strain>
    </source>
</reference>
<reference key="2">
    <citation type="journal article" date="2008" name="Dev. Cell">
        <title>Regulated secretion of a protease activates intercellular signaling during fruiting body formation in M. xanthus.</title>
        <authorList>
            <person name="Rolbetzki A."/>
            <person name="Ammon M."/>
            <person name="Jakovljevic V."/>
            <person name="Konovalova A."/>
            <person name="Soegaard-Andersen L."/>
        </authorList>
    </citation>
    <scope>FUNCTION</scope>
    <scope>ACTIVITY REGULATION</scope>
    <scope>SUBCELLULAR LOCATION</scope>
    <scope>DISRUPTION PHENOTYPE</scope>
    <scope>MUTAGENESIS OF SER-423</scope>
    <source>
        <strain>DK1622</strain>
    </source>
</reference>
<reference key="3">
    <citation type="journal article" date="2012" name="Mol. Microbiol.">
        <title>A RelA-dependent two-tiered regulated proteolysis cascade controls synthesis of a contact-dependent intercellular signal in Myxococcus xanthus.</title>
        <authorList>
            <person name="Konovalova A."/>
            <person name="Loebach S."/>
            <person name="Soegaard-Andersen L."/>
        </authorList>
    </citation>
    <scope>ACTIVITY REGULATION</scope>
    <scope>INTERACTION WITH POPD</scope>
    <scope>SUBCELLULAR LOCATION</scope>
    <source>
        <strain>DK101</strain>
    </source>
</reference>
<reference key="4">
    <citation type="journal article" date="2019" name="Nat. Commun.">
        <title>A TonB-dependent transporter is required for secretion of protease PopC across the bacterial outer membrane.</title>
        <authorList>
            <person name="Gomez-Santos N."/>
            <person name="Glatter T."/>
            <person name="Koebnik R."/>
            <person name="Swiatek-Polatynska M.A."/>
            <person name="Soegaard-Andersen L."/>
        </authorList>
    </citation>
    <scope>ACTIVITY REGULATION</scope>
    <scope>SUBCELLULAR LOCATION</scope>
    <source>
        <strain>DK101</strain>
    </source>
</reference>
<evidence type="ECO:0000255" key="1">
    <source>
        <dbReference type="PROSITE-ProRule" id="PRU01240"/>
    </source>
</evidence>
<evidence type="ECO:0000256" key="2">
    <source>
        <dbReference type="SAM" id="MobiDB-lite"/>
    </source>
</evidence>
<evidence type="ECO:0000269" key="3">
    <source>
    </source>
</evidence>
<evidence type="ECO:0000269" key="4">
    <source>
    </source>
</evidence>
<evidence type="ECO:0000269" key="5">
    <source>
    </source>
</evidence>
<evidence type="ECO:0000303" key="6">
    <source>
    </source>
</evidence>
<evidence type="ECO:0000303" key="7">
    <source>
    </source>
</evidence>
<evidence type="ECO:0000305" key="8">
    <source>
    </source>
</evidence>
<evidence type="ECO:0000312" key="9">
    <source>
        <dbReference type="EMBL" id="ABF89812.1"/>
    </source>
</evidence>